<dbReference type="EMBL" id="AF492661">
    <property type="protein sequence ID" value="AAM15910.1"/>
    <property type="molecule type" value="mRNA"/>
</dbReference>
<dbReference type="EMBL" id="AY090895">
    <property type="protein sequence ID" value="AAM16285.1"/>
    <property type="molecule type" value="mRNA"/>
</dbReference>
<dbReference type="EMBL" id="AC006284">
    <property type="protein sequence ID" value="AAD17431.1"/>
    <property type="molecule type" value="Genomic_DNA"/>
</dbReference>
<dbReference type="EMBL" id="CP002685">
    <property type="protein sequence ID" value="AEC05701.1"/>
    <property type="molecule type" value="Genomic_DNA"/>
</dbReference>
<dbReference type="EMBL" id="AK228718">
    <property type="protein sequence ID" value="BAF00620.1"/>
    <property type="molecule type" value="mRNA"/>
</dbReference>
<dbReference type="EMBL" id="AY297743">
    <property type="protein sequence ID" value="AAP81216.1"/>
    <property type="molecule type" value="mRNA"/>
</dbReference>
<dbReference type="PIR" id="F84448">
    <property type="entry name" value="F84448"/>
</dbReference>
<dbReference type="RefSeq" id="NP_178444.1">
    <molecule id="Q9ZQ81-1"/>
    <property type="nucleotide sequence ID" value="NM_126396.2"/>
</dbReference>
<dbReference type="SMR" id="Q9ZQ81"/>
<dbReference type="FunCoup" id="Q9ZQ81">
    <property type="interactions" value="113"/>
</dbReference>
<dbReference type="STRING" id="3702.Q9ZQ81"/>
<dbReference type="GlyCosmos" id="Q9ZQ81">
    <property type="glycosylation" value="8 sites, No reported glycans"/>
</dbReference>
<dbReference type="GlyGen" id="Q9ZQ81">
    <property type="glycosylation" value="8 sites"/>
</dbReference>
<dbReference type="PaxDb" id="3702-AT2G03450.1"/>
<dbReference type="ProteomicsDB" id="249035">
    <molecule id="Q9ZQ81-1"/>
</dbReference>
<dbReference type="EnsemblPlants" id="AT2G03450.1">
    <molecule id="Q9ZQ81-1"/>
    <property type="protein sequence ID" value="AT2G03450.1"/>
    <property type="gene ID" value="AT2G03450"/>
</dbReference>
<dbReference type="GeneID" id="814874"/>
<dbReference type="Gramene" id="AT2G03450.1">
    <molecule id="Q9ZQ81-1"/>
    <property type="protein sequence ID" value="AT2G03450.1"/>
    <property type="gene ID" value="AT2G03450"/>
</dbReference>
<dbReference type="KEGG" id="ath:AT2G03450"/>
<dbReference type="Araport" id="AT2G03450"/>
<dbReference type="TAIR" id="AT2G03450">
    <property type="gene designation" value="PAP9"/>
</dbReference>
<dbReference type="eggNOG" id="KOG1378">
    <property type="taxonomic scope" value="Eukaryota"/>
</dbReference>
<dbReference type="HOGENOM" id="CLU_013387_4_1_1"/>
<dbReference type="InParanoid" id="Q9ZQ81"/>
<dbReference type="OMA" id="HMCHAPA"/>
<dbReference type="PhylomeDB" id="Q9ZQ81"/>
<dbReference type="PRO" id="PR:Q9ZQ81"/>
<dbReference type="Proteomes" id="UP000006548">
    <property type="component" value="Chromosome 2"/>
</dbReference>
<dbReference type="ExpressionAtlas" id="Q9ZQ81">
    <property type="expression patterns" value="baseline and differential"/>
</dbReference>
<dbReference type="GO" id="GO:0005576">
    <property type="term" value="C:extracellular region"/>
    <property type="evidence" value="ECO:0007669"/>
    <property type="project" value="UniProtKB-SubCell"/>
</dbReference>
<dbReference type="GO" id="GO:0003993">
    <property type="term" value="F:acid phosphatase activity"/>
    <property type="evidence" value="ECO:0000250"/>
    <property type="project" value="TAIR"/>
</dbReference>
<dbReference type="GO" id="GO:0046872">
    <property type="term" value="F:metal ion binding"/>
    <property type="evidence" value="ECO:0007669"/>
    <property type="project" value="UniProtKB-KW"/>
</dbReference>
<dbReference type="CDD" id="cd00839">
    <property type="entry name" value="MPP_PAPs"/>
    <property type="match status" value="1"/>
</dbReference>
<dbReference type="FunFam" id="2.60.40.380:FF:000005">
    <property type="entry name" value="Purple acid phosphatase"/>
    <property type="match status" value="1"/>
</dbReference>
<dbReference type="FunFam" id="3.60.21.10:FF:000065">
    <property type="entry name" value="Purple acid phosphatase"/>
    <property type="match status" value="1"/>
</dbReference>
<dbReference type="Gene3D" id="3.60.21.10">
    <property type="match status" value="1"/>
</dbReference>
<dbReference type="Gene3D" id="2.60.40.380">
    <property type="entry name" value="Purple acid phosphatase-like, N-terminal"/>
    <property type="match status" value="1"/>
</dbReference>
<dbReference type="InterPro" id="IPR004843">
    <property type="entry name" value="Calcineurin-like_PHP_ApaH"/>
</dbReference>
<dbReference type="InterPro" id="IPR029052">
    <property type="entry name" value="Metallo-depent_PP-like"/>
</dbReference>
<dbReference type="InterPro" id="IPR041792">
    <property type="entry name" value="MPP_PAP"/>
</dbReference>
<dbReference type="InterPro" id="IPR008963">
    <property type="entry name" value="Purple_acid_Pase-like_N"/>
</dbReference>
<dbReference type="InterPro" id="IPR015914">
    <property type="entry name" value="Purple_acid_Pase_N"/>
</dbReference>
<dbReference type="InterPro" id="IPR025733">
    <property type="entry name" value="Purple_acid_PPase_C_dom"/>
</dbReference>
<dbReference type="PANTHER" id="PTHR45778:SF11">
    <property type="entry name" value="INACTIVE PURPLE ACID PHOSPHATASE 9-RELATED"/>
    <property type="match status" value="1"/>
</dbReference>
<dbReference type="PANTHER" id="PTHR45778">
    <property type="entry name" value="PURPLE ACID PHOSPHATASE-RELATED"/>
    <property type="match status" value="1"/>
</dbReference>
<dbReference type="Pfam" id="PF00149">
    <property type="entry name" value="Metallophos"/>
    <property type="match status" value="1"/>
</dbReference>
<dbReference type="Pfam" id="PF14008">
    <property type="entry name" value="Metallophos_C"/>
    <property type="match status" value="1"/>
</dbReference>
<dbReference type="Pfam" id="PF16656">
    <property type="entry name" value="Pur_ac_phosph_N"/>
    <property type="match status" value="1"/>
</dbReference>
<dbReference type="SUPFAM" id="SSF56300">
    <property type="entry name" value="Metallo-dependent phosphatases"/>
    <property type="match status" value="1"/>
</dbReference>
<dbReference type="SUPFAM" id="SSF49363">
    <property type="entry name" value="Purple acid phosphatase, N-terminal domain"/>
    <property type="match status" value="1"/>
</dbReference>
<keyword id="KW-0025">Alternative splicing</keyword>
<keyword id="KW-0325">Glycoprotein</keyword>
<keyword id="KW-0408">Iron</keyword>
<keyword id="KW-0479">Metal-binding</keyword>
<keyword id="KW-1185">Reference proteome</keyword>
<keyword id="KW-0964">Secreted</keyword>
<keyword id="KW-0732">Signal</keyword>
<keyword id="KW-0862">Zinc</keyword>
<protein>
    <recommendedName>
        <fullName>Probable inactive purple acid phosphatase 9</fullName>
    </recommendedName>
</protein>
<feature type="signal peptide" evidence="2">
    <location>
        <begin position="1"/>
        <end position="20"/>
    </location>
</feature>
<feature type="chain" id="PRO_0000372814" description="Probable inactive purple acid phosphatase 9">
    <location>
        <begin position="21"/>
        <end position="651"/>
    </location>
</feature>
<feature type="binding site" evidence="1">
    <location>
        <position position="305"/>
    </location>
    <ligand>
        <name>Fe cation</name>
        <dbReference type="ChEBI" id="CHEBI:24875"/>
    </ligand>
</feature>
<feature type="binding site" evidence="1">
    <location>
        <position position="305"/>
    </location>
    <ligand>
        <name>Zn(2+)</name>
        <dbReference type="ChEBI" id="CHEBI:29105"/>
    </ligand>
</feature>
<feature type="binding site" evidence="1">
    <location>
        <position position="308"/>
    </location>
    <ligand>
        <name>Fe cation</name>
        <dbReference type="ChEBI" id="CHEBI:24875"/>
    </ligand>
</feature>
<feature type="binding site" evidence="1">
    <location>
        <position position="338"/>
    </location>
    <ligand>
        <name>substrate</name>
    </ligand>
</feature>
<feature type="binding site" evidence="1">
    <location>
        <position position="338"/>
    </location>
    <ligand>
        <name>Zn(2+)</name>
        <dbReference type="ChEBI" id="CHEBI:29105"/>
    </ligand>
</feature>
<feature type="binding site" evidence="1">
    <location>
        <position position="444"/>
    </location>
    <ligand>
        <name>Zn(2+)</name>
        <dbReference type="ChEBI" id="CHEBI:29105"/>
    </ligand>
</feature>
<feature type="binding site" evidence="1">
    <location>
        <begin position="483"/>
        <end position="485"/>
    </location>
    <ligand>
        <name>substrate</name>
    </ligand>
</feature>
<feature type="binding site" evidence="1">
    <location>
        <position position="483"/>
    </location>
    <ligand>
        <name>Zn(2+)</name>
        <dbReference type="ChEBI" id="CHEBI:29105"/>
    </ligand>
</feature>
<feature type="binding site" evidence="1">
    <location>
        <position position="485"/>
    </location>
    <ligand>
        <name>Fe cation</name>
        <dbReference type="ChEBI" id="CHEBI:24875"/>
    </ligand>
</feature>
<feature type="glycosylation site" description="N-linked (GlcNAc...) asparagine" evidence="2">
    <location>
        <position position="32"/>
    </location>
</feature>
<feature type="glycosylation site" description="N-linked (GlcNAc...) asparagine" evidence="2">
    <location>
        <position position="96"/>
    </location>
</feature>
<feature type="glycosylation site" description="N-linked (GlcNAc...) asparagine" evidence="2">
    <location>
        <position position="202"/>
    </location>
</feature>
<feature type="glycosylation site" description="N-linked (GlcNAc...) asparagine" evidence="2">
    <location>
        <position position="378"/>
    </location>
</feature>
<feature type="glycosylation site" description="N-linked (GlcNAc...) asparagine" evidence="2">
    <location>
        <position position="432"/>
    </location>
</feature>
<feature type="glycosylation site" description="N-linked (GlcNAc...) asparagine" evidence="2">
    <location>
        <position position="475"/>
    </location>
</feature>
<feature type="glycosylation site" description="N-linked (GlcNAc...) asparagine" evidence="2">
    <location>
        <position position="495"/>
    </location>
</feature>
<feature type="glycosylation site" description="N-linked (GlcNAc...) asparagine" evidence="2">
    <location>
        <position position="640"/>
    </location>
</feature>
<feature type="splice variant" id="VSP_037191" description="In isoform 2." evidence="4">
    <location>
        <begin position="1"/>
        <end position="257"/>
    </location>
</feature>
<evidence type="ECO:0000250" key="1"/>
<evidence type="ECO:0000255" key="2"/>
<evidence type="ECO:0000269" key="3">
    <source>
    </source>
</evidence>
<evidence type="ECO:0000303" key="4">
    <source>
    </source>
</evidence>
<evidence type="ECO:0000305" key="5"/>
<reference key="1">
    <citation type="journal article" date="2002" name="J. Biol. Chem.">
        <title>Purple acid phosphatases of Arabidopsis thaliana. Comparative analysis and differential regulation by phosphate deprivation.</title>
        <authorList>
            <person name="Li D."/>
            <person name="Zhu H."/>
            <person name="Liu K."/>
            <person name="Liu X."/>
            <person name="Leggewie G."/>
            <person name="Udvardi M."/>
            <person name="Wang D."/>
        </authorList>
    </citation>
    <scope>NUCLEOTIDE SEQUENCE [MRNA] (ISOFORMS 1 AND 2)</scope>
    <scope>GENE FAMILY</scope>
    <scope>NOMENCLATURE</scope>
    <source>
        <strain>cv. Col-1</strain>
    </source>
</reference>
<reference key="2">
    <citation type="journal article" date="1999" name="Nature">
        <title>Sequence and analysis of chromosome 2 of the plant Arabidopsis thaliana.</title>
        <authorList>
            <person name="Lin X."/>
            <person name="Kaul S."/>
            <person name="Rounsley S.D."/>
            <person name="Shea T.P."/>
            <person name="Benito M.-I."/>
            <person name="Town C.D."/>
            <person name="Fujii C.Y."/>
            <person name="Mason T.M."/>
            <person name="Bowman C.L."/>
            <person name="Barnstead M.E."/>
            <person name="Feldblyum T.V."/>
            <person name="Buell C.R."/>
            <person name="Ketchum K.A."/>
            <person name="Lee J.J."/>
            <person name="Ronning C.M."/>
            <person name="Koo H.L."/>
            <person name="Moffat K.S."/>
            <person name="Cronin L.A."/>
            <person name="Shen M."/>
            <person name="Pai G."/>
            <person name="Van Aken S."/>
            <person name="Umayam L."/>
            <person name="Tallon L.J."/>
            <person name="Gill J.E."/>
            <person name="Adams M.D."/>
            <person name="Carrera A.J."/>
            <person name="Creasy T.H."/>
            <person name="Goodman H.M."/>
            <person name="Somerville C.R."/>
            <person name="Copenhaver G.P."/>
            <person name="Preuss D."/>
            <person name="Nierman W.C."/>
            <person name="White O."/>
            <person name="Eisen J.A."/>
            <person name="Salzberg S.L."/>
            <person name="Fraser C.M."/>
            <person name="Venter J.C."/>
        </authorList>
    </citation>
    <scope>NUCLEOTIDE SEQUENCE [LARGE SCALE GENOMIC DNA]</scope>
    <source>
        <strain>cv. Columbia</strain>
    </source>
</reference>
<reference key="3">
    <citation type="journal article" date="2017" name="Plant J.">
        <title>Araport11: a complete reannotation of the Arabidopsis thaliana reference genome.</title>
        <authorList>
            <person name="Cheng C.Y."/>
            <person name="Krishnakumar V."/>
            <person name="Chan A.P."/>
            <person name="Thibaud-Nissen F."/>
            <person name="Schobel S."/>
            <person name="Town C.D."/>
        </authorList>
    </citation>
    <scope>GENOME REANNOTATION</scope>
    <source>
        <strain>cv. Columbia</strain>
    </source>
</reference>
<reference key="4">
    <citation type="submission" date="2006-07" db="EMBL/GenBank/DDBJ databases">
        <title>Large-scale analysis of RIKEN Arabidopsis full-length (RAFL) cDNAs.</title>
        <authorList>
            <person name="Totoki Y."/>
            <person name="Seki M."/>
            <person name="Ishida J."/>
            <person name="Nakajima M."/>
            <person name="Enju A."/>
            <person name="Kamiya A."/>
            <person name="Narusaka M."/>
            <person name="Shin-i T."/>
            <person name="Nakagawa M."/>
            <person name="Sakamoto N."/>
            <person name="Oishi K."/>
            <person name="Kohara Y."/>
            <person name="Kobayashi M."/>
            <person name="Toyoda A."/>
            <person name="Sakaki Y."/>
            <person name="Sakurai T."/>
            <person name="Iida K."/>
            <person name="Akiyama K."/>
            <person name="Satou M."/>
            <person name="Toyoda T."/>
            <person name="Konagaya A."/>
            <person name="Carninci P."/>
            <person name="Kawai J."/>
            <person name="Hayashizaki Y."/>
            <person name="Shinozaki K."/>
        </authorList>
    </citation>
    <scope>NUCLEOTIDE SEQUENCE [LARGE SCALE MRNA] (ISOFORM 1)</scope>
    <source>
        <strain>cv. Columbia</strain>
    </source>
</reference>
<reference key="5">
    <citation type="submission" date="2003-05" db="EMBL/GenBank/DDBJ databases">
        <title>Identification of differentially displayed Arabidopsis thaliana acid phosphatase-encoding genes.</title>
        <authorList>
            <person name="Lohrasebi T."/>
            <person name="Malboobi M.A."/>
        </authorList>
    </citation>
    <scope>NUCLEOTIDE SEQUENCE [MRNA] OF 482-641 (ISOFORMS 1/2)</scope>
    <source>
        <tissue>Seedling</tissue>
    </source>
</reference>
<reference key="6">
    <citation type="journal article" date="2005" name="Plant Mol. Biol.">
        <title>Expression patterns of purple acid phosphatase genes in Arabidopsis organs and functional analysis of AtPAP23 predominantly transcribed in flower.</title>
        <authorList>
            <person name="Zhu H."/>
            <person name="Qian W."/>
            <person name="Lu X."/>
            <person name="Li D."/>
            <person name="Liu X."/>
            <person name="Liu K."/>
            <person name="Wang D."/>
        </authorList>
    </citation>
    <scope>TISSUE SPECIFICITY</scope>
</reference>
<name>PPA9_ARATH</name>
<sequence length="651" mass="73813">MIAAVYTLFFFFLLISSVYSKATISISPQTLNRSGDIVVIKWSGVESPSDLDWLGIYSPPDSPHDHFIGYKFLSDSPTWQSGSGSISLPLTNLRSNYTFRIFHWTQSEINPKHQDHDHNPLPGTRHLLTESNQLNFRFAVNRPEQIHLSYTDNINEMRVVFVTGDGEEREARYGEVKDKLDNIAVARGVRYEIEHMCHAPANSTVGWRDPGWTFDAVMKNLKQGIRYYYQVGSDLKGWSEIHSFVSRNEGSEETLAFMFGDMGCYTPYTTFIRGEEESLSTVKWILRDIEALGDDKPVIVSHIGDISYARGYSWIWDEFFTQIEPIASKVPYHVCIGNHEYDWPNQPWKPDWAAYVYGKDSGGECGVPYSVKFNMPGNSTEATGMVKGPQSRNLYYSYDMGSVHFVYISTETDFLKGGKQYSFLKSDLESVNRSKTPFVVVQGHRPMYTTSRKIRDAAIREKMIEHLEPLLVKNNVTVALWGHVHRYERFCAISNNTCGERWQGNPVHLVIGMAGKDSQPMWEPRANHEDVPIFPQPANSMYRGGEFGYIRLVANKERLTLSYVGNHDGEVHDVVEILASGEVISGSDDGTKDSNFGSESDFAVLWYIEGASVMVVGVIFGYFVGFLSRKKKESGVGSSNRSWIQVKNEET</sequence>
<comment type="cofactor">
    <cofactor evidence="1">
        <name>Fe cation</name>
        <dbReference type="ChEBI" id="CHEBI:24875"/>
    </cofactor>
    <text evidence="1">Binds 1 Fe cation per subunit.</text>
</comment>
<comment type="cofactor">
    <cofactor evidence="1">
        <name>Zn(2+)</name>
        <dbReference type="ChEBI" id="CHEBI:29105"/>
    </cofactor>
    <text evidence="1">Binds 1 zinc ion per subunit.</text>
</comment>
<comment type="subunit">
    <text evidence="1">Homodimer.</text>
</comment>
<comment type="subcellular location">
    <subcellularLocation>
        <location evidence="1">Secreted</location>
    </subcellularLocation>
</comment>
<comment type="alternative products">
    <event type="alternative splicing"/>
    <isoform>
        <id>Q9ZQ81-1</id>
        <name>1</name>
        <sequence type="displayed"/>
    </isoform>
    <isoform>
        <id>Q9ZQ81-2</id>
        <name>2</name>
        <sequence type="described" ref="VSP_037191"/>
    </isoform>
</comment>
<comment type="tissue specificity">
    <text evidence="3">Expressed in roots, stems, leaves, flowers and siliques.</text>
</comment>
<comment type="similarity">
    <text evidence="5">Belongs to the metallophosphoesterase superfamily. Purple acid phosphatase family.</text>
</comment>
<comment type="caution">
    <text evidence="5">Lacks the conserved His residue essential for phosphatase activity. Its enzyme activity is therefore unsure.</text>
</comment>
<accession>Q9ZQ81</accession>
<accession>Q7XY12</accession>
<accession>Q84QH4</accession>
<proteinExistence type="evidence at transcript level"/>
<gene>
    <name type="primary">PAP9</name>
    <name type="ordered locus">At2g03450</name>
    <name type="ORF">T4M8.12</name>
</gene>
<organism>
    <name type="scientific">Arabidopsis thaliana</name>
    <name type="common">Mouse-ear cress</name>
    <dbReference type="NCBI Taxonomy" id="3702"/>
    <lineage>
        <taxon>Eukaryota</taxon>
        <taxon>Viridiplantae</taxon>
        <taxon>Streptophyta</taxon>
        <taxon>Embryophyta</taxon>
        <taxon>Tracheophyta</taxon>
        <taxon>Spermatophyta</taxon>
        <taxon>Magnoliopsida</taxon>
        <taxon>eudicotyledons</taxon>
        <taxon>Gunneridae</taxon>
        <taxon>Pentapetalae</taxon>
        <taxon>rosids</taxon>
        <taxon>malvids</taxon>
        <taxon>Brassicales</taxon>
        <taxon>Brassicaceae</taxon>
        <taxon>Camelineae</taxon>
        <taxon>Arabidopsis</taxon>
    </lineage>
</organism>